<evidence type="ECO:0000255" key="1"/>
<evidence type="ECO:0000255" key="2">
    <source>
        <dbReference type="PROSITE-ProRule" id="PRU00498"/>
    </source>
</evidence>
<evidence type="ECO:0000256" key="3">
    <source>
        <dbReference type="SAM" id="MobiDB-lite"/>
    </source>
</evidence>
<evidence type="ECO:0000269" key="4">
    <source>
    </source>
</evidence>
<evidence type="ECO:0000305" key="5"/>
<name>HEXA_ARTBC</name>
<comment type="subcellular location">
    <subcellularLocation>
        <location evidence="4">Secreted</location>
    </subcellularLocation>
</comment>
<comment type="similarity">
    <text evidence="5">Belongs to the glycosyl hydrolase 3 family.</text>
</comment>
<accession>D4AQ52</accession>
<organism>
    <name type="scientific">Arthroderma benhamiae (strain ATCC MYA-4681 / CBS 112371)</name>
    <name type="common">Trichophyton mentagrophytes</name>
    <dbReference type="NCBI Taxonomy" id="663331"/>
    <lineage>
        <taxon>Eukaryota</taxon>
        <taxon>Fungi</taxon>
        <taxon>Dikarya</taxon>
        <taxon>Ascomycota</taxon>
        <taxon>Pezizomycotina</taxon>
        <taxon>Eurotiomycetes</taxon>
        <taxon>Eurotiomycetidae</taxon>
        <taxon>Onygenales</taxon>
        <taxon>Arthrodermataceae</taxon>
        <taxon>Trichophyton</taxon>
    </lineage>
</organism>
<reference key="1">
    <citation type="journal article" date="2011" name="Genome Biol.">
        <title>Comparative and functional genomics provide insights into the pathogenicity of dermatophytic fungi.</title>
        <authorList>
            <person name="Burmester A."/>
            <person name="Shelest E."/>
            <person name="Gloeckner G."/>
            <person name="Heddergott C."/>
            <person name="Schindler S."/>
            <person name="Staib P."/>
            <person name="Heidel A."/>
            <person name="Felder M."/>
            <person name="Petzold A."/>
            <person name="Szafranski K."/>
            <person name="Feuermann M."/>
            <person name="Pedruzzi I."/>
            <person name="Priebe S."/>
            <person name="Groth M."/>
            <person name="Winkler R."/>
            <person name="Li W."/>
            <person name="Kniemeyer O."/>
            <person name="Schroeckh V."/>
            <person name="Hertweck C."/>
            <person name="Hube B."/>
            <person name="White T.C."/>
            <person name="Platzer M."/>
            <person name="Guthke R."/>
            <person name="Heitman J."/>
            <person name="Woestemeyer J."/>
            <person name="Zipfel P.F."/>
            <person name="Monod M."/>
            <person name="Brakhage A.A."/>
        </authorList>
    </citation>
    <scope>NUCLEOTIDE SEQUENCE [LARGE SCALE GENOMIC DNA]</scope>
    <source>
        <strain>ATCC MYA-4681 / CBS 112371</strain>
    </source>
</reference>
<reference key="2">
    <citation type="journal article" date="2011" name="Proteomics">
        <title>Identification of novel secreted proteases during extracellular proteolysis by dermatophytes at acidic pH.</title>
        <authorList>
            <person name="Sriranganadane D."/>
            <person name="Waridel P."/>
            <person name="Salamin K."/>
            <person name="Feuermann M."/>
            <person name="Mignon B."/>
            <person name="Staib P."/>
            <person name="Neuhaus J.M."/>
            <person name="Quadroni M."/>
            <person name="Monod M."/>
        </authorList>
    </citation>
    <scope>IDENTIFICATION BY MASS SPECTROMETRY</scope>
    <scope>SUBCELLULAR LOCATION</scope>
</reference>
<feature type="signal peptide" evidence="1">
    <location>
        <begin position="1"/>
        <end position="18"/>
    </location>
</feature>
<feature type="chain" id="PRO_0000434661" description="Uncharacterized secreted glycosyl hydrolase ARB_06359" evidence="1">
    <location>
        <begin position="19"/>
        <end position="353"/>
    </location>
</feature>
<feature type="region of interest" description="Disordered" evidence="3">
    <location>
        <begin position="94"/>
        <end position="119"/>
    </location>
</feature>
<feature type="compositionally biased region" description="Polar residues" evidence="3">
    <location>
        <begin position="105"/>
        <end position="119"/>
    </location>
</feature>
<feature type="glycosylation site" description="N-linked (GlcNAc...) asparagine" evidence="2">
    <location>
        <position position="165"/>
    </location>
</feature>
<feature type="glycosylation site" description="N-linked (GlcNAc...) asparagine" evidence="2">
    <location>
        <position position="312"/>
    </location>
</feature>
<protein>
    <recommendedName>
        <fullName evidence="5">Uncharacterized secreted glycosyl hydrolase ARB_06359</fullName>
        <ecNumber evidence="5">3.2.1.-</ecNumber>
    </recommendedName>
</protein>
<dbReference type="EC" id="3.2.1.-" evidence="5"/>
<dbReference type="EMBL" id="ABSU01000005">
    <property type="protein sequence ID" value="EFE34596.1"/>
    <property type="molecule type" value="Genomic_DNA"/>
</dbReference>
<dbReference type="RefSeq" id="XP_003015236.1">
    <property type="nucleotide sequence ID" value="XM_003015190.1"/>
</dbReference>
<dbReference type="SMR" id="D4AQ52"/>
<dbReference type="STRING" id="663331.D4AQ52"/>
<dbReference type="GeneID" id="9520960"/>
<dbReference type="KEGG" id="abe:ARB_06359"/>
<dbReference type="eggNOG" id="ENOG502SJNP">
    <property type="taxonomic scope" value="Eukaryota"/>
</dbReference>
<dbReference type="HOGENOM" id="CLU_008392_0_1_1"/>
<dbReference type="OMA" id="WQMAAEM"/>
<dbReference type="OrthoDB" id="416222at2759"/>
<dbReference type="Proteomes" id="UP000008866">
    <property type="component" value="Unassembled WGS sequence"/>
</dbReference>
<dbReference type="GO" id="GO:0005576">
    <property type="term" value="C:extracellular region"/>
    <property type="evidence" value="ECO:0007669"/>
    <property type="project" value="UniProtKB-SubCell"/>
</dbReference>
<dbReference type="GO" id="GO:0004553">
    <property type="term" value="F:hydrolase activity, hydrolyzing O-glycosyl compounds"/>
    <property type="evidence" value="ECO:0007669"/>
    <property type="project" value="InterPro"/>
</dbReference>
<dbReference type="GO" id="GO:0005975">
    <property type="term" value="P:carbohydrate metabolic process"/>
    <property type="evidence" value="ECO:0007669"/>
    <property type="project" value="InterPro"/>
</dbReference>
<dbReference type="GO" id="GO:0009254">
    <property type="term" value="P:peptidoglycan turnover"/>
    <property type="evidence" value="ECO:0007669"/>
    <property type="project" value="TreeGrafter"/>
</dbReference>
<dbReference type="Gene3D" id="3.20.20.300">
    <property type="entry name" value="Glycoside hydrolase, family 3, N-terminal domain"/>
    <property type="match status" value="1"/>
</dbReference>
<dbReference type="InterPro" id="IPR001764">
    <property type="entry name" value="Glyco_hydro_3_N"/>
</dbReference>
<dbReference type="InterPro" id="IPR036962">
    <property type="entry name" value="Glyco_hydro_3_N_sf"/>
</dbReference>
<dbReference type="InterPro" id="IPR017853">
    <property type="entry name" value="Glycoside_hydrolase_SF"/>
</dbReference>
<dbReference type="InterPro" id="IPR050226">
    <property type="entry name" value="NagZ_Beta-hexosaminidase"/>
</dbReference>
<dbReference type="PANTHER" id="PTHR30480">
    <property type="entry name" value="BETA-HEXOSAMINIDASE-RELATED"/>
    <property type="match status" value="1"/>
</dbReference>
<dbReference type="PANTHER" id="PTHR30480:SF14">
    <property type="entry name" value="HYDROLASE, PUTATIVE (AFU_ORTHOLOGUE AFUA_4G13770)-RELATED"/>
    <property type="match status" value="1"/>
</dbReference>
<dbReference type="Pfam" id="PF00933">
    <property type="entry name" value="Glyco_hydro_3"/>
    <property type="match status" value="1"/>
</dbReference>
<dbReference type="SUPFAM" id="SSF51445">
    <property type="entry name" value="(Trans)glycosidases"/>
    <property type="match status" value="1"/>
</dbReference>
<proteinExistence type="evidence at protein level"/>
<keyword id="KW-0325">Glycoprotein</keyword>
<keyword id="KW-0326">Glycosidase</keyword>
<keyword id="KW-0378">Hydrolase</keyword>
<keyword id="KW-1185">Reference proteome</keyword>
<keyword id="KW-0964">Secreted</keyword>
<keyword id="KW-0732">Signal</keyword>
<gene>
    <name type="ORF">ARB_06359</name>
</gene>
<sequence length="353" mass="37598">MKFVLFAQLAAVAAPAIAIDLAVQAGQHVMYSYPGLTPPESLYKLTSEGKVGGLIIFKENVNSNLPAIMDKFQALYKASPAYNGHPMIITTDQEGGNVRRVPGGPSQSARQIGDSSTPMQAASQAGRDAAAALKAQKINGNLAPVLDIYREEGNFIDEFGRSFGNNTEIVTSCGSAFAISQSRSGVLSTVKHFPGLGAAKKGENTDLVPIKIDLSLDEIRTFDEVPYRTAIRNGVDLIMTSWAVYPSLDAKYPAGLSRKWTTDELRTRLGYKGVIITDAIEAGSLKSFGNDGQRGVLAAKAGVDILLASGRNATQGEAIVNEIVAALKKGTLSMTEFQESSKRIQALQSRLSA</sequence>